<evidence type="ECO:0000269" key="1">
    <source>
    </source>
</evidence>
<evidence type="ECO:0000305" key="2"/>
<accession>P43306</accession>
<feature type="signal peptide" evidence="1">
    <location>
        <begin position="1"/>
        <end position="24"/>
    </location>
</feature>
<feature type="chain" id="PRO_0000012474" description="Progonadoliberin-2">
    <location>
        <begin position="25"/>
        <end position="86"/>
    </location>
</feature>
<feature type="peptide" id="PRO_0000012475" description="Gonadoliberin-2">
    <location>
        <begin position="25"/>
        <end position="34"/>
    </location>
</feature>
<feature type="peptide" id="PRO_0000012476" description="GnRH-associated peptide 2">
    <location>
        <begin position="38"/>
        <end position="86"/>
    </location>
</feature>
<feature type="modified residue" description="Pyrrolidone carboxylic acid" evidence="1">
    <location>
        <position position="25"/>
    </location>
</feature>
<feature type="modified residue" description="Glycine amide" evidence="1">
    <location>
        <position position="34"/>
    </location>
</feature>
<sequence length="86" mass="9766">MVSVCRLLLVAALLLCLQAQLSFSQHWSHGWYPGGKREIDSYSSPEISGEIKLCEAGECSYLRPLRTNILKSILIDTLARKFQKRK</sequence>
<reference key="1">
    <citation type="journal article" date="1994" name="Eur. J. Biochem.">
        <title>Isolation, characterization and expression of cDNAs encoding the catfish-type and chicken-II-type gonadotropin-releasing-hormone precursors in the African catfish.</title>
        <authorList>
            <person name="Bogerd J."/>
            <person name="Zandbergen T."/>
            <person name="Andersson E."/>
            <person name="Goos H."/>
        </authorList>
    </citation>
    <scope>NUCLEOTIDE SEQUENCE [MRNA]</scope>
    <source>
        <tissue>Brain</tissue>
    </source>
</reference>
<reference key="2">
    <citation type="journal article" date="1992" name="Biochem. Biophys. Res. Commun.">
        <title>Two gonadotropin-releasing hormones from African catfish (Clarias gariepinus).</title>
        <authorList>
            <person name="Bogerd J."/>
            <person name="Li K.W."/>
            <person name="Janssen-Dommerholt C."/>
            <person name="Goos H."/>
        </authorList>
    </citation>
    <scope>PROTEIN SEQUENCE OF 25-34</scope>
    <scope>PYROGLUTAMATE FORMATION AT GLN-25</scope>
    <scope>AMIDATION AT GLY-34</scope>
    <source>
        <tissue>Brain</tissue>
    </source>
</reference>
<protein>
    <recommendedName>
        <fullName>Progonadoliberin-2</fullName>
    </recommendedName>
    <alternativeName>
        <fullName>Progonadoliberin II</fullName>
    </alternativeName>
    <component>
        <recommendedName>
            <fullName>Gonadoliberin-2</fullName>
        </recommendedName>
        <alternativeName>
            <fullName>Gonadoliberin II</fullName>
        </alternativeName>
        <alternativeName>
            <fullName>Gonadotropin-releasing hormone II</fullName>
            <shortName>GnRH II</shortName>
        </alternativeName>
        <alternativeName>
            <fullName>Luliberin II</fullName>
        </alternativeName>
        <alternativeName>
            <fullName>Luteinizing hormone-releasing hormone II</fullName>
            <shortName>LH-RH II</shortName>
        </alternativeName>
    </component>
    <component>
        <recommendedName>
            <fullName>GnRH-associated peptide 2</fullName>
        </recommendedName>
        <alternativeName>
            <fullName>GnRH-associated peptide II</fullName>
        </alternativeName>
    </component>
</protein>
<dbReference type="EMBL" id="X78047">
    <property type="protein sequence ID" value="CAA54969.1"/>
    <property type="molecule type" value="mRNA"/>
</dbReference>
<dbReference type="PIR" id="S45600">
    <property type="entry name" value="RHID2S"/>
</dbReference>
<dbReference type="RefSeq" id="XP_053334404.1">
    <property type="nucleotide sequence ID" value="XM_053478429.1"/>
</dbReference>
<dbReference type="GeneID" id="128507476"/>
<dbReference type="OrthoDB" id="8490433at2759"/>
<dbReference type="GO" id="GO:0005615">
    <property type="term" value="C:extracellular space"/>
    <property type="evidence" value="ECO:0000250"/>
    <property type="project" value="UniProtKB"/>
</dbReference>
<dbReference type="GO" id="GO:0005183">
    <property type="term" value="F:gonadotropin hormone-releasing hormone activity"/>
    <property type="evidence" value="ECO:0007669"/>
    <property type="project" value="TreeGrafter"/>
</dbReference>
<dbReference type="GO" id="GO:0031530">
    <property type="term" value="F:gonadotropin-releasing hormone receptor binding"/>
    <property type="evidence" value="ECO:0007669"/>
    <property type="project" value="TreeGrafter"/>
</dbReference>
<dbReference type="InterPro" id="IPR002012">
    <property type="entry name" value="GnRH"/>
</dbReference>
<dbReference type="InterPro" id="IPR019792">
    <property type="entry name" value="Gonadoliberin"/>
</dbReference>
<dbReference type="PANTHER" id="PTHR10522">
    <property type="entry name" value="GONADOLIBERIN"/>
    <property type="match status" value="1"/>
</dbReference>
<dbReference type="PANTHER" id="PTHR10522:SF8">
    <property type="entry name" value="PROGONADOLIBERIN"/>
    <property type="match status" value="1"/>
</dbReference>
<dbReference type="Pfam" id="PF00446">
    <property type="entry name" value="GnRH"/>
    <property type="match status" value="1"/>
</dbReference>
<dbReference type="PROSITE" id="PS00473">
    <property type="entry name" value="GNRH"/>
    <property type="match status" value="1"/>
</dbReference>
<proteinExistence type="evidence at protein level"/>
<name>GON2_CLAGA</name>
<organism>
    <name type="scientific">Clarias gariepinus</name>
    <name type="common">North African catfish</name>
    <name type="synonym">Silurus gariepinus</name>
    <dbReference type="NCBI Taxonomy" id="13013"/>
    <lineage>
        <taxon>Eukaryota</taxon>
        <taxon>Metazoa</taxon>
        <taxon>Chordata</taxon>
        <taxon>Craniata</taxon>
        <taxon>Vertebrata</taxon>
        <taxon>Euteleostomi</taxon>
        <taxon>Actinopterygii</taxon>
        <taxon>Neopterygii</taxon>
        <taxon>Teleostei</taxon>
        <taxon>Ostariophysi</taxon>
        <taxon>Siluriformes</taxon>
        <taxon>Clariidae</taxon>
        <taxon>Clarias</taxon>
    </lineage>
</organism>
<comment type="function">
    <text>Stimulates the secretion of gonadotropins.</text>
</comment>
<comment type="subcellular location">
    <subcellularLocation>
        <location>Secreted</location>
    </subcellularLocation>
</comment>
<comment type="similarity">
    <text evidence="2">Belongs to the GnRH family.</text>
</comment>
<gene>
    <name type="primary">gnrh2</name>
</gene>
<keyword id="KW-0027">Amidation</keyword>
<keyword id="KW-0165">Cleavage on pair of basic residues</keyword>
<keyword id="KW-0903">Direct protein sequencing</keyword>
<keyword id="KW-0372">Hormone</keyword>
<keyword id="KW-0873">Pyrrolidone carboxylic acid</keyword>
<keyword id="KW-0964">Secreted</keyword>
<keyword id="KW-0732">Signal</keyword>